<reference key="1">
    <citation type="journal article" date="2005" name="Science">
        <title>The transcriptional landscape of the mammalian genome.</title>
        <authorList>
            <person name="Carninci P."/>
            <person name="Kasukawa T."/>
            <person name="Katayama S."/>
            <person name="Gough J."/>
            <person name="Frith M.C."/>
            <person name="Maeda N."/>
            <person name="Oyama R."/>
            <person name="Ravasi T."/>
            <person name="Lenhard B."/>
            <person name="Wells C."/>
            <person name="Kodzius R."/>
            <person name="Shimokawa K."/>
            <person name="Bajic V.B."/>
            <person name="Brenner S.E."/>
            <person name="Batalov S."/>
            <person name="Forrest A.R."/>
            <person name="Zavolan M."/>
            <person name="Davis M.J."/>
            <person name="Wilming L.G."/>
            <person name="Aidinis V."/>
            <person name="Allen J.E."/>
            <person name="Ambesi-Impiombato A."/>
            <person name="Apweiler R."/>
            <person name="Aturaliya R.N."/>
            <person name="Bailey T.L."/>
            <person name="Bansal M."/>
            <person name="Baxter L."/>
            <person name="Beisel K.W."/>
            <person name="Bersano T."/>
            <person name="Bono H."/>
            <person name="Chalk A.M."/>
            <person name="Chiu K.P."/>
            <person name="Choudhary V."/>
            <person name="Christoffels A."/>
            <person name="Clutterbuck D.R."/>
            <person name="Crowe M.L."/>
            <person name="Dalla E."/>
            <person name="Dalrymple B.P."/>
            <person name="de Bono B."/>
            <person name="Della Gatta G."/>
            <person name="di Bernardo D."/>
            <person name="Down T."/>
            <person name="Engstrom P."/>
            <person name="Fagiolini M."/>
            <person name="Faulkner G."/>
            <person name="Fletcher C.F."/>
            <person name="Fukushima T."/>
            <person name="Furuno M."/>
            <person name="Futaki S."/>
            <person name="Gariboldi M."/>
            <person name="Georgii-Hemming P."/>
            <person name="Gingeras T.R."/>
            <person name="Gojobori T."/>
            <person name="Green R.E."/>
            <person name="Gustincich S."/>
            <person name="Harbers M."/>
            <person name="Hayashi Y."/>
            <person name="Hensch T.K."/>
            <person name="Hirokawa N."/>
            <person name="Hill D."/>
            <person name="Huminiecki L."/>
            <person name="Iacono M."/>
            <person name="Ikeo K."/>
            <person name="Iwama A."/>
            <person name="Ishikawa T."/>
            <person name="Jakt M."/>
            <person name="Kanapin A."/>
            <person name="Katoh M."/>
            <person name="Kawasawa Y."/>
            <person name="Kelso J."/>
            <person name="Kitamura H."/>
            <person name="Kitano H."/>
            <person name="Kollias G."/>
            <person name="Krishnan S.P."/>
            <person name="Kruger A."/>
            <person name="Kummerfeld S.K."/>
            <person name="Kurochkin I.V."/>
            <person name="Lareau L.F."/>
            <person name="Lazarevic D."/>
            <person name="Lipovich L."/>
            <person name="Liu J."/>
            <person name="Liuni S."/>
            <person name="McWilliam S."/>
            <person name="Madan Babu M."/>
            <person name="Madera M."/>
            <person name="Marchionni L."/>
            <person name="Matsuda H."/>
            <person name="Matsuzawa S."/>
            <person name="Miki H."/>
            <person name="Mignone F."/>
            <person name="Miyake S."/>
            <person name="Morris K."/>
            <person name="Mottagui-Tabar S."/>
            <person name="Mulder N."/>
            <person name="Nakano N."/>
            <person name="Nakauchi H."/>
            <person name="Ng P."/>
            <person name="Nilsson R."/>
            <person name="Nishiguchi S."/>
            <person name="Nishikawa S."/>
            <person name="Nori F."/>
            <person name="Ohara O."/>
            <person name="Okazaki Y."/>
            <person name="Orlando V."/>
            <person name="Pang K.C."/>
            <person name="Pavan W.J."/>
            <person name="Pavesi G."/>
            <person name="Pesole G."/>
            <person name="Petrovsky N."/>
            <person name="Piazza S."/>
            <person name="Reed J."/>
            <person name="Reid J.F."/>
            <person name="Ring B.Z."/>
            <person name="Ringwald M."/>
            <person name="Rost B."/>
            <person name="Ruan Y."/>
            <person name="Salzberg S.L."/>
            <person name="Sandelin A."/>
            <person name="Schneider C."/>
            <person name="Schoenbach C."/>
            <person name="Sekiguchi K."/>
            <person name="Semple C.A."/>
            <person name="Seno S."/>
            <person name="Sessa L."/>
            <person name="Sheng Y."/>
            <person name="Shibata Y."/>
            <person name="Shimada H."/>
            <person name="Shimada K."/>
            <person name="Silva D."/>
            <person name="Sinclair B."/>
            <person name="Sperling S."/>
            <person name="Stupka E."/>
            <person name="Sugiura K."/>
            <person name="Sultana R."/>
            <person name="Takenaka Y."/>
            <person name="Taki K."/>
            <person name="Tammoja K."/>
            <person name="Tan S.L."/>
            <person name="Tang S."/>
            <person name="Taylor M.S."/>
            <person name="Tegner J."/>
            <person name="Teichmann S.A."/>
            <person name="Ueda H.R."/>
            <person name="van Nimwegen E."/>
            <person name="Verardo R."/>
            <person name="Wei C.L."/>
            <person name="Yagi K."/>
            <person name="Yamanishi H."/>
            <person name="Zabarovsky E."/>
            <person name="Zhu S."/>
            <person name="Zimmer A."/>
            <person name="Hide W."/>
            <person name="Bult C."/>
            <person name="Grimmond S.M."/>
            <person name="Teasdale R.D."/>
            <person name="Liu E.T."/>
            <person name="Brusic V."/>
            <person name="Quackenbush J."/>
            <person name="Wahlestedt C."/>
            <person name="Mattick J.S."/>
            <person name="Hume D.A."/>
            <person name="Kai C."/>
            <person name="Sasaki D."/>
            <person name="Tomaru Y."/>
            <person name="Fukuda S."/>
            <person name="Kanamori-Katayama M."/>
            <person name="Suzuki M."/>
            <person name="Aoki J."/>
            <person name="Arakawa T."/>
            <person name="Iida J."/>
            <person name="Imamura K."/>
            <person name="Itoh M."/>
            <person name="Kato T."/>
            <person name="Kawaji H."/>
            <person name="Kawagashira N."/>
            <person name="Kawashima T."/>
            <person name="Kojima M."/>
            <person name="Kondo S."/>
            <person name="Konno H."/>
            <person name="Nakano K."/>
            <person name="Ninomiya N."/>
            <person name="Nishio T."/>
            <person name="Okada M."/>
            <person name="Plessy C."/>
            <person name="Shibata K."/>
            <person name="Shiraki T."/>
            <person name="Suzuki S."/>
            <person name="Tagami M."/>
            <person name="Waki K."/>
            <person name="Watahiki A."/>
            <person name="Okamura-Oho Y."/>
            <person name="Suzuki H."/>
            <person name="Kawai J."/>
            <person name="Hayashizaki Y."/>
        </authorList>
    </citation>
    <scope>NUCLEOTIDE SEQUENCE [LARGE SCALE MRNA]</scope>
    <source>
        <strain>C57BL/6J</strain>
        <tissue>Testis</tissue>
    </source>
</reference>
<reference key="2">
    <citation type="journal article" date="2009" name="PLoS Biol.">
        <title>Lineage-specific biology revealed by a finished genome assembly of the mouse.</title>
        <authorList>
            <person name="Church D.M."/>
            <person name="Goodstadt L."/>
            <person name="Hillier L.W."/>
            <person name="Zody M.C."/>
            <person name="Goldstein S."/>
            <person name="She X."/>
            <person name="Bult C.J."/>
            <person name="Agarwala R."/>
            <person name="Cherry J.L."/>
            <person name="DiCuccio M."/>
            <person name="Hlavina W."/>
            <person name="Kapustin Y."/>
            <person name="Meric P."/>
            <person name="Maglott D."/>
            <person name="Birtle Z."/>
            <person name="Marques A.C."/>
            <person name="Graves T."/>
            <person name="Zhou S."/>
            <person name="Teague B."/>
            <person name="Potamousis K."/>
            <person name="Churas C."/>
            <person name="Place M."/>
            <person name="Herschleb J."/>
            <person name="Runnheim R."/>
            <person name="Forrest D."/>
            <person name="Amos-Landgraf J."/>
            <person name="Schwartz D.C."/>
            <person name="Cheng Z."/>
            <person name="Lindblad-Toh K."/>
            <person name="Eichler E.E."/>
            <person name="Ponting C.P."/>
        </authorList>
    </citation>
    <scope>NUCLEOTIDE SEQUENCE [LARGE SCALE GENOMIC DNA]</scope>
    <source>
        <strain>C57BL/6J</strain>
    </source>
</reference>
<sequence>MSSDKSSDSKNGLKNCDPRCEQKCETKCQPSCLNKLLQRCSEKCSLDKCPPSPNCPPCPPCPPCPLVCQSQCSTPTSPLCPPLCSPRCSGTLACCPPSCPQKGCVKPCPPKCPSPCLPRK</sequence>
<name>LELP1_MOUSE</name>
<protein>
    <recommendedName>
        <fullName>Late cornified envelope-like proline-rich protein 1</fullName>
    </recommendedName>
</protein>
<accession>Q9DAE3</accession>
<accession>E9QNZ8</accession>
<gene>
    <name type="primary">Lelp1</name>
</gene>
<evidence type="ECO:0000305" key="1"/>
<proteinExistence type="evidence at transcript level"/>
<feature type="chain" id="PRO_0000271605" description="Late cornified envelope-like proline-rich protein 1">
    <location>
        <begin position="1"/>
        <end position="120"/>
    </location>
</feature>
<feature type="sequence conflict" description="In Ref. 1; BAB24309." evidence="1" ref="1">
    <original>P</original>
    <variation>H</variation>
    <location>
        <position position="65"/>
    </location>
</feature>
<dbReference type="EMBL" id="AK005903">
    <property type="protein sequence ID" value="BAB24309.1"/>
    <property type="molecule type" value="mRNA"/>
</dbReference>
<dbReference type="EMBL" id="AC138676">
    <property type="status" value="NOT_ANNOTATED_CDS"/>
    <property type="molecule type" value="Genomic_DNA"/>
</dbReference>
<dbReference type="CCDS" id="CCDS50974.1"/>
<dbReference type="RefSeq" id="NP_081318.1">
    <property type="nucleotide sequence ID" value="NM_027042.1"/>
</dbReference>
<dbReference type="STRING" id="10090.ENSMUSP00000029535"/>
<dbReference type="SwissPalm" id="Q9DAE3"/>
<dbReference type="PaxDb" id="10090-ENSMUSP00000029535"/>
<dbReference type="ProteomicsDB" id="264936"/>
<dbReference type="Antibodypedia" id="50369">
    <property type="antibodies" value="98 antibodies from 13 providers"/>
</dbReference>
<dbReference type="Ensembl" id="ENSMUST00000029535.6">
    <property type="protein sequence ID" value="ENSMUSP00000029535.5"/>
    <property type="gene ID" value="ENSMUSG00000027927.6"/>
</dbReference>
<dbReference type="GeneID" id="69332"/>
<dbReference type="KEGG" id="mmu:69332"/>
<dbReference type="UCSC" id="uc008qdn.2">
    <property type="organism name" value="mouse"/>
</dbReference>
<dbReference type="AGR" id="MGI:1916582"/>
<dbReference type="CTD" id="149018"/>
<dbReference type="MGI" id="MGI:1916582">
    <property type="gene designation" value="Lelp1"/>
</dbReference>
<dbReference type="VEuPathDB" id="HostDB:ENSMUSG00000027927"/>
<dbReference type="eggNOG" id="ENOG502TE5G">
    <property type="taxonomic scope" value="Eukaryota"/>
</dbReference>
<dbReference type="GeneTree" id="ENSGT00730000111592"/>
<dbReference type="HOGENOM" id="CLU_2269932_0_0_1"/>
<dbReference type="InParanoid" id="Q9DAE3"/>
<dbReference type="OMA" id="KCESKCQ"/>
<dbReference type="OrthoDB" id="9837821at2759"/>
<dbReference type="BioGRID-ORCS" id="69332">
    <property type="hits" value="0 hits in 76 CRISPR screens"/>
</dbReference>
<dbReference type="PRO" id="PR:Q9DAE3"/>
<dbReference type="Proteomes" id="UP000000589">
    <property type="component" value="Chromosome 3"/>
</dbReference>
<dbReference type="RNAct" id="Q9DAE3">
    <property type="molecule type" value="protein"/>
</dbReference>
<dbReference type="Bgee" id="ENSMUSG00000027927">
    <property type="expression patterns" value="Expressed in seminiferous tubule of testis and 4 other cell types or tissues"/>
</dbReference>
<dbReference type="InterPro" id="IPR026076">
    <property type="entry name" value="Lelp1"/>
</dbReference>
<dbReference type="Pfam" id="PF15042">
    <property type="entry name" value="LELP1"/>
    <property type="match status" value="1"/>
</dbReference>
<keyword id="KW-1185">Reference proteome</keyword>
<comment type="similarity">
    <text evidence="1">Belongs to the cornifin (SPRR) family.</text>
</comment>
<organism>
    <name type="scientific">Mus musculus</name>
    <name type="common">Mouse</name>
    <dbReference type="NCBI Taxonomy" id="10090"/>
    <lineage>
        <taxon>Eukaryota</taxon>
        <taxon>Metazoa</taxon>
        <taxon>Chordata</taxon>
        <taxon>Craniata</taxon>
        <taxon>Vertebrata</taxon>
        <taxon>Euteleostomi</taxon>
        <taxon>Mammalia</taxon>
        <taxon>Eutheria</taxon>
        <taxon>Euarchontoglires</taxon>
        <taxon>Glires</taxon>
        <taxon>Rodentia</taxon>
        <taxon>Myomorpha</taxon>
        <taxon>Muroidea</taxon>
        <taxon>Muridae</taxon>
        <taxon>Murinae</taxon>
        <taxon>Mus</taxon>
        <taxon>Mus</taxon>
    </lineage>
</organism>